<keyword id="KW-0963">Cytoplasm</keyword>
<keyword id="KW-0255">Endonuclease</keyword>
<keyword id="KW-0378">Hydrolase</keyword>
<keyword id="KW-0460">Magnesium</keyword>
<keyword id="KW-0479">Metal-binding</keyword>
<keyword id="KW-0540">Nuclease</keyword>
<dbReference type="EC" id="3.1.26.4" evidence="1"/>
<dbReference type="EMBL" id="CP001097">
    <property type="protein sequence ID" value="ACD89715.1"/>
    <property type="molecule type" value="Genomic_DNA"/>
</dbReference>
<dbReference type="RefSeq" id="WP_012465596.1">
    <property type="nucleotide sequence ID" value="NC_010803.1"/>
</dbReference>
<dbReference type="SMR" id="B3EH35"/>
<dbReference type="STRING" id="290315.Clim_0628"/>
<dbReference type="KEGG" id="cli:Clim_0628"/>
<dbReference type="eggNOG" id="COG0328">
    <property type="taxonomic scope" value="Bacteria"/>
</dbReference>
<dbReference type="HOGENOM" id="CLU_030894_6_2_10"/>
<dbReference type="OrthoDB" id="7845843at2"/>
<dbReference type="Proteomes" id="UP000008841">
    <property type="component" value="Chromosome"/>
</dbReference>
<dbReference type="GO" id="GO:0005737">
    <property type="term" value="C:cytoplasm"/>
    <property type="evidence" value="ECO:0007669"/>
    <property type="project" value="UniProtKB-SubCell"/>
</dbReference>
<dbReference type="GO" id="GO:0000287">
    <property type="term" value="F:magnesium ion binding"/>
    <property type="evidence" value="ECO:0007669"/>
    <property type="project" value="UniProtKB-UniRule"/>
</dbReference>
<dbReference type="GO" id="GO:0003676">
    <property type="term" value="F:nucleic acid binding"/>
    <property type="evidence" value="ECO:0007669"/>
    <property type="project" value="InterPro"/>
</dbReference>
<dbReference type="GO" id="GO:0004523">
    <property type="term" value="F:RNA-DNA hybrid ribonuclease activity"/>
    <property type="evidence" value="ECO:0007669"/>
    <property type="project" value="UniProtKB-UniRule"/>
</dbReference>
<dbReference type="GO" id="GO:0043137">
    <property type="term" value="P:DNA replication, removal of RNA primer"/>
    <property type="evidence" value="ECO:0007669"/>
    <property type="project" value="TreeGrafter"/>
</dbReference>
<dbReference type="CDD" id="cd09278">
    <property type="entry name" value="RNase_HI_prokaryote_like"/>
    <property type="match status" value="1"/>
</dbReference>
<dbReference type="FunFam" id="3.30.420.10:FF:000089">
    <property type="entry name" value="Ribonuclease H"/>
    <property type="match status" value="1"/>
</dbReference>
<dbReference type="Gene3D" id="3.30.420.10">
    <property type="entry name" value="Ribonuclease H-like superfamily/Ribonuclease H"/>
    <property type="match status" value="1"/>
</dbReference>
<dbReference type="HAMAP" id="MF_00042">
    <property type="entry name" value="RNase_H"/>
    <property type="match status" value="1"/>
</dbReference>
<dbReference type="InterPro" id="IPR050092">
    <property type="entry name" value="RNase_H"/>
</dbReference>
<dbReference type="InterPro" id="IPR012337">
    <property type="entry name" value="RNaseH-like_sf"/>
</dbReference>
<dbReference type="InterPro" id="IPR002156">
    <property type="entry name" value="RNaseH_domain"/>
</dbReference>
<dbReference type="InterPro" id="IPR036397">
    <property type="entry name" value="RNaseH_sf"/>
</dbReference>
<dbReference type="InterPro" id="IPR022892">
    <property type="entry name" value="RNaseHI"/>
</dbReference>
<dbReference type="NCBIfam" id="NF001236">
    <property type="entry name" value="PRK00203.1"/>
    <property type="match status" value="1"/>
</dbReference>
<dbReference type="PANTHER" id="PTHR10642">
    <property type="entry name" value="RIBONUCLEASE H1"/>
    <property type="match status" value="1"/>
</dbReference>
<dbReference type="PANTHER" id="PTHR10642:SF26">
    <property type="entry name" value="RIBONUCLEASE H1"/>
    <property type="match status" value="1"/>
</dbReference>
<dbReference type="Pfam" id="PF00075">
    <property type="entry name" value="RNase_H"/>
    <property type="match status" value="1"/>
</dbReference>
<dbReference type="SUPFAM" id="SSF53098">
    <property type="entry name" value="Ribonuclease H-like"/>
    <property type="match status" value="1"/>
</dbReference>
<dbReference type="PROSITE" id="PS50879">
    <property type="entry name" value="RNASE_H_1"/>
    <property type="match status" value="1"/>
</dbReference>
<evidence type="ECO:0000255" key="1">
    <source>
        <dbReference type="HAMAP-Rule" id="MF_00042"/>
    </source>
</evidence>
<evidence type="ECO:0000255" key="2">
    <source>
        <dbReference type="PROSITE-ProRule" id="PRU00408"/>
    </source>
</evidence>
<protein>
    <recommendedName>
        <fullName evidence="1">Ribonuclease H</fullName>
        <shortName evidence="1">RNase H</shortName>
        <ecNumber evidence="1">3.1.26.4</ecNumber>
    </recommendedName>
</protein>
<proteinExistence type="inferred from homology"/>
<name>RNH_CHLL2</name>
<feature type="chain" id="PRO_1000090893" description="Ribonuclease H">
    <location>
        <begin position="1"/>
        <end position="146"/>
    </location>
</feature>
<feature type="domain" description="RNase H type-1" evidence="2">
    <location>
        <begin position="1"/>
        <end position="143"/>
    </location>
</feature>
<feature type="binding site" evidence="1">
    <location>
        <position position="10"/>
    </location>
    <ligand>
        <name>Mg(2+)</name>
        <dbReference type="ChEBI" id="CHEBI:18420"/>
        <label>1</label>
    </ligand>
</feature>
<feature type="binding site" evidence="1">
    <location>
        <position position="10"/>
    </location>
    <ligand>
        <name>Mg(2+)</name>
        <dbReference type="ChEBI" id="CHEBI:18420"/>
        <label>2</label>
    </ligand>
</feature>
<feature type="binding site" evidence="1">
    <location>
        <position position="48"/>
    </location>
    <ligand>
        <name>Mg(2+)</name>
        <dbReference type="ChEBI" id="CHEBI:18420"/>
        <label>1</label>
    </ligand>
</feature>
<feature type="binding site" evidence="1">
    <location>
        <position position="70"/>
    </location>
    <ligand>
        <name>Mg(2+)</name>
        <dbReference type="ChEBI" id="CHEBI:18420"/>
        <label>1</label>
    </ligand>
</feature>
<feature type="binding site" evidence="1">
    <location>
        <position position="135"/>
    </location>
    <ligand>
        <name>Mg(2+)</name>
        <dbReference type="ChEBI" id="CHEBI:18420"/>
        <label>2</label>
    </ligand>
</feature>
<reference key="1">
    <citation type="submission" date="2008-05" db="EMBL/GenBank/DDBJ databases">
        <title>Complete sequence of Chlorobium limicola DSM 245.</title>
        <authorList>
            <consortium name="US DOE Joint Genome Institute"/>
            <person name="Lucas S."/>
            <person name="Copeland A."/>
            <person name="Lapidus A."/>
            <person name="Glavina del Rio T."/>
            <person name="Dalin E."/>
            <person name="Tice H."/>
            <person name="Bruce D."/>
            <person name="Goodwin L."/>
            <person name="Pitluck S."/>
            <person name="Schmutz J."/>
            <person name="Larimer F."/>
            <person name="Land M."/>
            <person name="Hauser L."/>
            <person name="Kyrpides N."/>
            <person name="Ovchinnikova G."/>
            <person name="Zhao F."/>
            <person name="Li T."/>
            <person name="Liu Z."/>
            <person name="Overmann J."/>
            <person name="Bryant D.A."/>
            <person name="Richardson P."/>
        </authorList>
    </citation>
    <scope>NUCLEOTIDE SEQUENCE [LARGE SCALE GENOMIC DNA]</scope>
    <source>
        <strain>DSM 245 / NBRC 103803 / 6330</strain>
    </source>
</reference>
<comment type="function">
    <text evidence="1">Endonuclease that specifically degrades the RNA of RNA-DNA hybrids.</text>
</comment>
<comment type="catalytic activity">
    <reaction evidence="1">
        <text>Endonucleolytic cleavage to 5'-phosphomonoester.</text>
        <dbReference type="EC" id="3.1.26.4"/>
    </reaction>
</comment>
<comment type="cofactor">
    <cofactor evidence="1">
        <name>Mg(2+)</name>
        <dbReference type="ChEBI" id="CHEBI:18420"/>
    </cofactor>
    <text evidence="1">Binds 1 Mg(2+) ion per subunit. May bind a second metal ion at a regulatory site, or after substrate binding.</text>
</comment>
<comment type="subunit">
    <text evidence="1">Monomer.</text>
</comment>
<comment type="subcellular location">
    <subcellularLocation>
        <location evidence="1">Cytoplasm</location>
    </subcellularLocation>
</comment>
<comment type="similarity">
    <text evidence="1">Belongs to the RNase H family.</text>
</comment>
<organism>
    <name type="scientific">Chlorobium limicola (strain DSM 245 / NBRC 103803 / 6330)</name>
    <dbReference type="NCBI Taxonomy" id="290315"/>
    <lineage>
        <taxon>Bacteria</taxon>
        <taxon>Pseudomonadati</taxon>
        <taxon>Chlorobiota</taxon>
        <taxon>Chlorobiia</taxon>
        <taxon>Chlorobiales</taxon>
        <taxon>Chlorobiaceae</taxon>
        <taxon>Chlorobium/Pelodictyon group</taxon>
        <taxon>Chlorobium</taxon>
    </lineage>
</organism>
<gene>
    <name evidence="1" type="primary">rnhA</name>
    <name type="ordered locus">Clim_0628</name>
</gene>
<accession>B3EH35</accession>
<sequence length="146" mass="16378">MKKRVTIYTDGACSGNPGRGGWGALMMYGTVNRELSGYEPATTNNRMELTAAIEGLDALKEPCVVDLYSDSAYLVNALNQGWLKRWTTNNWTTSAKKSVENIDLWKKILKLVTLHQVTFHKVKGHSDNPFNNRCDELARQAIKNNS</sequence>